<accession>C0QRE6</accession>
<gene>
    <name evidence="1" type="primary">cysS</name>
    <name type="ordered locus">PERMA_1474</name>
</gene>
<comment type="catalytic activity">
    <reaction evidence="1">
        <text>tRNA(Cys) + L-cysteine + ATP = L-cysteinyl-tRNA(Cys) + AMP + diphosphate</text>
        <dbReference type="Rhea" id="RHEA:17773"/>
        <dbReference type="Rhea" id="RHEA-COMP:9661"/>
        <dbReference type="Rhea" id="RHEA-COMP:9679"/>
        <dbReference type="ChEBI" id="CHEBI:30616"/>
        <dbReference type="ChEBI" id="CHEBI:33019"/>
        <dbReference type="ChEBI" id="CHEBI:35235"/>
        <dbReference type="ChEBI" id="CHEBI:78442"/>
        <dbReference type="ChEBI" id="CHEBI:78517"/>
        <dbReference type="ChEBI" id="CHEBI:456215"/>
        <dbReference type="EC" id="6.1.1.16"/>
    </reaction>
</comment>
<comment type="cofactor">
    <cofactor evidence="1">
        <name>Zn(2+)</name>
        <dbReference type="ChEBI" id="CHEBI:29105"/>
    </cofactor>
    <text evidence="1">Binds 1 zinc ion per subunit.</text>
</comment>
<comment type="subunit">
    <text evidence="1">Monomer.</text>
</comment>
<comment type="subcellular location">
    <subcellularLocation>
        <location evidence="1">Cytoplasm</location>
    </subcellularLocation>
</comment>
<comment type="similarity">
    <text evidence="1">Belongs to the class-I aminoacyl-tRNA synthetase family.</text>
</comment>
<dbReference type="EC" id="6.1.1.16" evidence="1"/>
<dbReference type="EMBL" id="CP001230">
    <property type="protein sequence ID" value="ACO03603.1"/>
    <property type="molecule type" value="Genomic_DNA"/>
</dbReference>
<dbReference type="RefSeq" id="WP_012675842.1">
    <property type="nucleotide sequence ID" value="NC_012440.1"/>
</dbReference>
<dbReference type="SMR" id="C0QRE6"/>
<dbReference type="STRING" id="123214.PERMA_1474"/>
<dbReference type="PaxDb" id="123214-PERMA_1474"/>
<dbReference type="KEGG" id="pmx:PERMA_1474"/>
<dbReference type="eggNOG" id="COG0215">
    <property type="taxonomic scope" value="Bacteria"/>
</dbReference>
<dbReference type="HOGENOM" id="CLU_013528_0_1_0"/>
<dbReference type="OrthoDB" id="9815130at2"/>
<dbReference type="Proteomes" id="UP000001366">
    <property type="component" value="Chromosome"/>
</dbReference>
<dbReference type="GO" id="GO:0005829">
    <property type="term" value="C:cytosol"/>
    <property type="evidence" value="ECO:0007669"/>
    <property type="project" value="TreeGrafter"/>
</dbReference>
<dbReference type="GO" id="GO:0005524">
    <property type="term" value="F:ATP binding"/>
    <property type="evidence" value="ECO:0007669"/>
    <property type="project" value="UniProtKB-UniRule"/>
</dbReference>
<dbReference type="GO" id="GO:0004817">
    <property type="term" value="F:cysteine-tRNA ligase activity"/>
    <property type="evidence" value="ECO:0007669"/>
    <property type="project" value="UniProtKB-UniRule"/>
</dbReference>
<dbReference type="GO" id="GO:0008270">
    <property type="term" value="F:zinc ion binding"/>
    <property type="evidence" value="ECO:0007669"/>
    <property type="project" value="UniProtKB-UniRule"/>
</dbReference>
<dbReference type="GO" id="GO:0006423">
    <property type="term" value="P:cysteinyl-tRNA aminoacylation"/>
    <property type="evidence" value="ECO:0007669"/>
    <property type="project" value="UniProtKB-UniRule"/>
</dbReference>
<dbReference type="CDD" id="cd00672">
    <property type="entry name" value="CysRS_core"/>
    <property type="match status" value="1"/>
</dbReference>
<dbReference type="FunFam" id="3.40.50.620:FF:000009">
    <property type="entry name" value="Cysteine--tRNA ligase"/>
    <property type="match status" value="1"/>
</dbReference>
<dbReference type="Gene3D" id="1.20.120.1910">
    <property type="entry name" value="Cysteine-tRNA ligase, C-terminal anti-codon recognition domain"/>
    <property type="match status" value="1"/>
</dbReference>
<dbReference type="Gene3D" id="3.40.50.620">
    <property type="entry name" value="HUPs"/>
    <property type="match status" value="1"/>
</dbReference>
<dbReference type="HAMAP" id="MF_00041">
    <property type="entry name" value="Cys_tRNA_synth"/>
    <property type="match status" value="1"/>
</dbReference>
<dbReference type="InterPro" id="IPR015803">
    <property type="entry name" value="Cys-tRNA-ligase"/>
</dbReference>
<dbReference type="InterPro" id="IPR015273">
    <property type="entry name" value="Cys-tRNA-synt_Ia_DALR"/>
</dbReference>
<dbReference type="InterPro" id="IPR024909">
    <property type="entry name" value="Cys-tRNA/MSH_ligase"/>
</dbReference>
<dbReference type="InterPro" id="IPR056411">
    <property type="entry name" value="CysS_C"/>
</dbReference>
<dbReference type="InterPro" id="IPR014729">
    <property type="entry name" value="Rossmann-like_a/b/a_fold"/>
</dbReference>
<dbReference type="InterPro" id="IPR032678">
    <property type="entry name" value="tRNA-synt_1_cat_dom"/>
</dbReference>
<dbReference type="InterPro" id="IPR009080">
    <property type="entry name" value="tRNAsynth_Ia_anticodon-bd"/>
</dbReference>
<dbReference type="NCBIfam" id="TIGR00435">
    <property type="entry name" value="cysS"/>
    <property type="match status" value="1"/>
</dbReference>
<dbReference type="PANTHER" id="PTHR10890:SF3">
    <property type="entry name" value="CYSTEINE--TRNA LIGASE, CYTOPLASMIC"/>
    <property type="match status" value="1"/>
</dbReference>
<dbReference type="PANTHER" id="PTHR10890">
    <property type="entry name" value="CYSTEINYL-TRNA SYNTHETASE"/>
    <property type="match status" value="1"/>
</dbReference>
<dbReference type="Pfam" id="PF23493">
    <property type="entry name" value="CysS_C"/>
    <property type="match status" value="1"/>
</dbReference>
<dbReference type="Pfam" id="PF09190">
    <property type="entry name" value="DALR_2"/>
    <property type="match status" value="1"/>
</dbReference>
<dbReference type="Pfam" id="PF01406">
    <property type="entry name" value="tRNA-synt_1e"/>
    <property type="match status" value="1"/>
</dbReference>
<dbReference type="PRINTS" id="PR00983">
    <property type="entry name" value="TRNASYNTHCYS"/>
</dbReference>
<dbReference type="SMART" id="SM00840">
    <property type="entry name" value="DALR_2"/>
    <property type="match status" value="1"/>
</dbReference>
<dbReference type="SUPFAM" id="SSF47323">
    <property type="entry name" value="Anticodon-binding domain of a subclass of class I aminoacyl-tRNA synthetases"/>
    <property type="match status" value="1"/>
</dbReference>
<dbReference type="SUPFAM" id="SSF52374">
    <property type="entry name" value="Nucleotidylyl transferase"/>
    <property type="match status" value="1"/>
</dbReference>
<feature type="chain" id="PRO_1000199083" description="Cysteine--tRNA ligase">
    <location>
        <begin position="1"/>
        <end position="487"/>
    </location>
</feature>
<feature type="short sequence motif" description="'HIGH' region">
    <location>
        <begin position="31"/>
        <end position="41"/>
    </location>
</feature>
<feature type="short sequence motif" description="'KMSKS' region">
    <location>
        <begin position="266"/>
        <end position="270"/>
    </location>
</feature>
<feature type="binding site" evidence="1">
    <location>
        <position position="29"/>
    </location>
    <ligand>
        <name>Zn(2+)</name>
        <dbReference type="ChEBI" id="CHEBI:29105"/>
    </ligand>
</feature>
<feature type="binding site" evidence="1">
    <location>
        <position position="209"/>
    </location>
    <ligand>
        <name>Zn(2+)</name>
        <dbReference type="ChEBI" id="CHEBI:29105"/>
    </ligand>
</feature>
<feature type="binding site" evidence="1">
    <location>
        <position position="234"/>
    </location>
    <ligand>
        <name>Zn(2+)</name>
        <dbReference type="ChEBI" id="CHEBI:29105"/>
    </ligand>
</feature>
<feature type="binding site" evidence="1">
    <location>
        <position position="238"/>
    </location>
    <ligand>
        <name>Zn(2+)</name>
        <dbReference type="ChEBI" id="CHEBI:29105"/>
    </ligand>
</feature>
<feature type="binding site" evidence="1">
    <location>
        <position position="269"/>
    </location>
    <ligand>
        <name>ATP</name>
        <dbReference type="ChEBI" id="CHEBI:30616"/>
    </ligand>
</feature>
<organism>
    <name type="scientific">Persephonella marina (strain DSM 14350 / EX-H1)</name>
    <dbReference type="NCBI Taxonomy" id="123214"/>
    <lineage>
        <taxon>Bacteria</taxon>
        <taxon>Pseudomonadati</taxon>
        <taxon>Aquificota</taxon>
        <taxon>Aquificia</taxon>
        <taxon>Aquificales</taxon>
        <taxon>Hydrogenothermaceae</taxon>
        <taxon>Persephonella</taxon>
    </lineage>
</organism>
<keyword id="KW-0030">Aminoacyl-tRNA synthetase</keyword>
<keyword id="KW-0067">ATP-binding</keyword>
<keyword id="KW-0963">Cytoplasm</keyword>
<keyword id="KW-0436">Ligase</keyword>
<keyword id="KW-0479">Metal-binding</keyword>
<keyword id="KW-0547">Nucleotide-binding</keyword>
<keyword id="KW-0648">Protein biosynthesis</keyword>
<keyword id="KW-1185">Reference proteome</keyword>
<keyword id="KW-0862">Zinc</keyword>
<name>SYC_PERMH</name>
<reference key="1">
    <citation type="journal article" date="2009" name="J. Bacteriol.">
        <title>Complete and draft genome sequences of six members of the Aquificales.</title>
        <authorList>
            <person name="Reysenbach A.-L."/>
            <person name="Hamamura N."/>
            <person name="Podar M."/>
            <person name="Griffiths E."/>
            <person name="Ferreira S."/>
            <person name="Hochstein R."/>
            <person name="Heidelberg J."/>
            <person name="Johnson J."/>
            <person name="Mead D."/>
            <person name="Pohorille A."/>
            <person name="Sarmiento M."/>
            <person name="Schweighofer K."/>
            <person name="Seshadri R."/>
            <person name="Voytek M.A."/>
        </authorList>
    </citation>
    <scope>NUCLEOTIDE SEQUENCE [LARGE SCALE GENOMIC DNA]</scope>
    <source>
        <strain>DSM 14350 / EX-H1</strain>
    </source>
</reference>
<evidence type="ECO:0000255" key="1">
    <source>
        <dbReference type="HAMAP-Rule" id="MF_00041"/>
    </source>
</evidence>
<proteinExistence type="inferred from homology"/>
<protein>
    <recommendedName>
        <fullName evidence="1">Cysteine--tRNA ligase</fullName>
        <ecNumber evidence="1">6.1.1.16</ecNumber>
    </recommendedName>
    <alternativeName>
        <fullName evidence="1">Cysteinyl-tRNA synthetase</fullName>
        <shortName evidence="1">CysRS</shortName>
    </alternativeName>
</protein>
<sequence>MSLKVYNTLTGKKEEFVPIKPGEVKIYTCGVTVYDVNHVGHGRSLIVFDVIRRYLRYLGYNVYFVRNFTDVDDKIINRAKNECLPFTVIADRYIKEYFQDAENFRIEPADVEPRVTTHIPDIIDFIQRLIDKGYAYEVEGDVYFSVRKFKEYGKLSKRSVDELIAGARVEPGEKKRDPLDFALWKASKAGEPAWDSPWGKGRPGWHTECCAMIFKHLGETIDIHGGGLDLTFPHHENELAQAEALSDKPFARYWIHNGLVTVNGQKMSKSLGNYITLKEIYSKYDPDVLRLLVLSVHYRSPLDFSWEKMEETKKAYERLKGAIDEYEILKKLPENPDFDEHLYDEIAKAEQGFYAAMSDDFNTPEALASLFTLVREMNILRDKAVKSGGISKKALESYKEASDVLHSIGKEIFGLFDSLQPCIEVEEIKVEKAEEKIDTQLVEALIEVRNKARKEKQFEIADYIREKLSQLGIVIEDTPVGTKWKKK</sequence>